<feature type="initiator methionine" description="Removed" evidence="1">
    <location>
        <position position="1"/>
    </location>
</feature>
<feature type="chain" id="PRO_1000202825" description="Formamidopyrimidine-DNA glycosylase">
    <location>
        <begin position="2"/>
        <end position="275"/>
    </location>
</feature>
<feature type="zinc finger region" description="FPG-type" evidence="2">
    <location>
        <begin position="240"/>
        <end position="274"/>
    </location>
</feature>
<feature type="active site" description="Schiff-base intermediate with DNA" evidence="2">
    <location>
        <position position="2"/>
    </location>
</feature>
<feature type="active site" description="Proton donor" evidence="2">
    <location>
        <position position="3"/>
    </location>
</feature>
<feature type="active site" description="Proton donor; for beta-elimination activity" evidence="2">
    <location>
        <position position="59"/>
    </location>
</feature>
<feature type="active site" description="Proton donor; for delta-elimination activity" evidence="2">
    <location>
        <position position="264"/>
    </location>
</feature>
<feature type="binding site" evidence="2">
    <location>
        <position position="92"/>
    </location>
    <ligand>
        <name>DNA</name>
        <dbReference type="ChEBI" id="CHEBI:16991"/>
    </ligand>
</feature>
<feature type="binding site" evidence="2">
    <location>
        <position position="111"/>
    </location>
    <ligand>
        <name>DNA</name>
        <dbReference type="ChEBI" id="CHEBI:16991"/>
    </ligand>
</feature>
<feature type="binding site" evidence="2">
    <location>
        <position position="155"/>
    </location>
    <ligand>
        <name>DNA</name>
        <dbReference type="ChEBI" id="CHEBI:16991"/>
    </ligand>
</feature>
<gene>
    <name evidence="2" type="primary">mutM</name>
    <name evidence="2" type="synonym">fpg</name>
    <name type="ordered locus">EAT1b_0661</name>
</gene>
<comment type="function">
    <text evidence="2">Involved in base excision repair of DNA damaged by oxidation or by mutagenic agents. Acts as a DNA glycosylase that recognizes and removes damaged bases. Has a preference for oxidized purines, such as 7,8-dihydro-8-oxoguanine (8-oxoG). Has AP (apurinic/apyrimidinic) lyase activity and introduces nicks in the DNA strand. Cleaves the DNA backbone by beta-delta elimination to generate a single-strand break at the site of the removed base with both 3'- and 5'-phosphates.</text>
</comment>
<comment type="catalytic activity">
    <reaction evidence="2">
        <text>Hydrolysis of DNA containing ring-opened 7-methylguanine residues, releasing 2,6-diamino-4-hydroxy-5-(N-methyl)formamidopyrimidine.</text>
        <dbReference type="EC" id="3.2.2.23"/>
    </reaction>
</comment>
<comment type="catalytic activity">
    <reaction evidence="2">
        <text>2'-deoxyribonucleotide-(2'-deoxyribose 5'-phosphate)-2'-deoxyribonucleotide-DNA = a 3'-end 2'-deoxyribonucleotide-(2,3-dehydro-2,3-deoxyribose 5'-phosphate)-DNA + a 5'-end 5'-phospho-2'-deoxyribonucleoside-DNA + H(+)</text>
        <dbReference type="Rhea" id="RHEA:66592"/>
        <dbReference type="Rhea" id="RHEA-COMP:13180"/>
        <dbReference type="Rhea" id="RHEA-COMP:16897"/>
        <dbReference type="Rhea" id="RHEA-COMP:17067"/>
        <dbReference type="ChEBI" id="CHEBI:15378"/>
        <dbReference type="ChEBI" id="CHEBI:136412"/>
        <dbReference type="ChEBI" id="CHEBI:157695"/>
        <dbReference type="ChEBI" id="CHEBI:167181"/>
        <dbReference type="EC" id="4.2.99.18"/>
    </reaction>
</comment>
<comment type="cofactor">
    <cofactor evidence="2">
        <name>Zn(2+)</name>
        <dbReference type="ChEBI" id="CHEBI:29105"/>
    </cofactor>
    <text evidence="2">Binds 1 zinc ion per subunit.</text>
</comment>
<comment type="subunit">
    <text evidence="2">Monomer.</text>
</comment>
<comment type="similarity">
    <text evidence="2">Belongs to the FPG family.</text>
</comment>
<name>FPG_EXISA</name>
<dbReference type="EC" id="3.2.2.23" evidence="2"/>
<dbReference type="EC" id="4.2.99.18" evidence="2"/>
<dbReference type="EMBL" id="CP001615">
    <property type="protein sequence ID" value="ACQ69592.1"/>
    <property type="molecule type" value="Genomic_DNA"/>
</dbReference>
<dbReference type="RefSeq" id="WP_012726711.1">
    <property type="nucleotide sequence ID" value="NC_012673.1"/>
</dbReference>
<dbReference type="SMR" id="C4L470"/>
<dbReference type="STRING" id="360911.EAT1b_0661"/>
<dbReference type="KEGG" id="eat:EAT1b_0661"/>
<dbReference type="eggNOG" id="COG0266">
    <property type="taxonomic scope" value="Bacteria"/>
</dbReference>
<dbReference type="HOGENOM" id="CLU_038423_1_2_9"/>
<dbReference type="OrthoDB" id="9800855at2"/>
<dbReference type="Proteomes" id="UP000000716">
    <property type="component" value="Chromosome"/>
</dbReference>
<dbReference type="GO" id="GO:0034039">
    <property type="term" value="F:8-oxo-7,8-dihydroguanine DNA N-glycosylase activity"/>
    <property type="evidence" value="ECO:0007669"/>
    <property type="project" value="TreeGrafter"/>
</dbReference>
<dbReference type="GO" id="GO:0140078">
    <property type="term" value="F:class I DNA-(apurinic or apyrimidinic site) endonuclease activity"/>
    <property type="evidence" value="ECO:0007669"/>
    <property type="project" value="UniProtKB-EC"/>
</dbReference>
<dbReference type="GO" id="GO:0003684">
    <property type="term" value="F:damaged DNA binding"/>
    <property type="evidence" value="ECO:0007669"/>
    <property type="project" value="InterPro"/>
</dbReference>
<dbReference type="GO" id="GO:0008270">
    <property type="term" value="F:zinc ion binding"/>
    <property type="evidence" value="ECO:0007669"/>
    <property type="project" value="UniProtKB-UniRule"/>
</dbReference>
<dbReference type="GO" id="GO:0006284">
    <property type="term" value="P:base-excision repair"/>
    <property type="evidence" value="ECO:0007669"/>
    <property type="project" value="InterPro"/>
</dbReference>
<dbReference type="CDD" id="cd08966">
    <property type="entry name" value="EcFpg-like_N"/>
    <property type="match status" value="1"/>
</dbReference>
<dbReference type="FunFam" id="1.10.8.50:FF:000003">
    <property type="entry name" value="Formamidopyrimidine-DNA glycosylase"/>
    <property type="match status" value="1"/>
</dbReference>
<dbReference type="Gene3D" id="1.10.8.50">
    <property type="match status" value="1"/>
</dbReference>
<dbReference type="Gene3D" id="3.20.190.10">
    <property type="entry name" value="MutM-like, N-terminal"/>
    <property type="match status" value="1"/>
</dbReference>
<dbReference type="HAMAP" id="MF_00103">
    <property type="entry name" value="Fapy_DNA_glycosyl"/>
    <property type="match status" value="1"/>
</dbReference>
<dbReference type="InterPro" id="IPR015886">
    <property type="entry name" value="DNA_glyclase/AP_lyase_DNA-bd"/>
</dbReference>
<dbReference type="InterPro" id="IPR015887">
    <property type="entry name" value="DNA_glyclase_Znf_dom_DNA_BS"/>
</dbReference>
<dbReference type="InterPro" id="IPR020629">
    <property type="entry name" value="Formamido-pyr_DNA_Glyclase"/>
</dbReference>
<dbReference type="InterPro" id="IPR012319">
    <property type="entry name" value="FPG_cat"/>
</dbReference>
<dbReference type="InterPro" id="IPR035937">
    <property type="entry name" value="MutM-like_N-ter"/>
</dbReference>
<dbReference type="InterPro" id="IPR010979">
    <property type="entry name" value="Ribosomal_uS13-like_H2TH"/>
</dbReference>
<dbReference type="InterPro" id="IPR000214">
    <property type="entry name" value="Znf_DNA_glyclase/AP_lyase"/>
</dbReference>
<dbReference type="InterPro" id="IPR010663">
    <property type="entry name" value="Znf_FPG/IleRS"/>
</dbReference>
<dbReference type="NCBIfam" id="TIGR00577">
    <property type="entry name" value="fpg"/>
    <property type="match status" value="1"/>
</dbReference>
<dbReference type="NCBIfam" id="NF002211">
    <property type="entry name" value="PRK01103.1"/>
    <property type="match status" value="1"/>
</dbReference>
<dbReference type="PANTHER" id="PTHR22993">
    <property type="entry name" value="FORMAMIDOPYRIMIDINE-DNA GLYCOSYLASE"/>
    <property type="match status" value="1"/>
</dbReference>
<dbReference type="PANTHER" id="PTHR22993:SF9">
    <property type="entry name" value="FORMAMIDOPYRIMIDINE-DNA GLYCOSYLASE"/>
    <property type="match status" value="1"/>
</dbReference>
<dbReference type="Pfam" id="PF01149">
    <property type="entry name" value="Fapy_DNA_glyco"/>
    <property type="match status" value="1"/>
</dbReference>
<dbReference type="Pfam" id="PF06831">
    <property type="entry name" value="H2TH"/>
    <property type="match status" value="1"/>
</dbReference>
<dbReference type="Pfam" id="PF06827">
    <property type="entry name" value="zf-FPG_IleRS"/>
    <property type="match status" value="1"/>
</dbReference>
<dbReference type="SMART" id="SM00898">
    <property type="entry name" value="Fapy_DNA_glyco"/>
    <property type="match status" value="1"/>
</dbReference>
<dbReference type="SMART" id="SM01232">
    <property type="entry name" value="H2TH"/>
    <property type="match status" value="1"/>
</dbReference>
<dbReference type="SUPFAM" id="SSF57716">
    <property type="entry name" value="Glucocorticoid receptor-like (DNA-binding domain)"/>
    <property type="match status" value="1"/>
</dbReference>
<dbReference type="SUPFAM" id="SSF81624">
    <property type="entry name" value="N-terminal domain of MutM-like DNA repair proteins"/>
    <property type="match status" value="1"/>
</dbReference>
<dbReference type="SUPFAM" id="SSF46946">
    <property type="entry name" value="S13-like H2TH domain"/>
    <property type="match status" value="1"/>
</dbReference>
<dbReference type="PROSITE" id="PS51068">
    <property type="entry name" value="FPG_CAT"/>
    <property type="match status" value="1"/>
</dbReference>
<dbReference type="PROSITE" id="PS01242">
    <property type="entry name" value="ZF_FPG_1"/>
    <property type="match status" value="1"/>
</dbReference>
<dbReference type="PROSITE" id="PS51066">
    <property type="entry name" value="ZF_FPG_2"/>
    <property type="match status" value="1"/>
</dbReference>
<reference key="1">
    <citation type="journal article" date="2011" name="J. Bacteriol.">
        <title>Complete genome sequence of the Thermophilic Bacterium Exiguobacterium sp. AT1b.</title>
        <authorList>
            <person name="Vishnivetskaya T.A."/>
            <person name="Lucas S."/>
            <person name="Copeland A."/>
            <person name="Lapidus A."/>
            <person name="Glavina del Rio T."/>
            <person name="Dalin E."/>
            <person name="Tice H."/>
            <person name="Bruce D.C."/>
            <person name="Goodwin L.A."/>
            <person name="Pitluck S."/>
            <person name="Saunders E."/>
            <person name="Brettin T."/>
            <person name="Detter C."/>
            <person name="Han C."/>
            <person name="Larimer F."/>
            <person name="Land M.L."/>
            <person name="Hauser L.J."/>
            <person name="Kyrpides N.C."/>
            <person name="Ovchinnikova G."/>
            <person name="Kathariou S."/>
            <person name="Ramaley R.F."/>
            <person name="Rodrigues D.F."/>
            <person name="Hendrix C."/>
            <person name="Richardson P."/>
            <person name="Tiedje J.M."/>
        </authorList>
    </citation>
    <scope>NUCLEOTIDE SEQUENCE [LARGE SCALE GENOMIC DNA]</scope>
    <source>
        <strain>ATCC BAA-1283 / AT1b</strain>
    </source>
</reference>
<protein>
    <recommendedName>
        <fullName evidence="2">Formamidopyrimidine-DNA glycosylase</fullName>
        <shortName evidence="2">Fapy-DNA glycosylase</shortName>
        <ecNumber evidence="2">3.2.2.23</ecNumber>
    </recommendedName>
    <alternativeName>
        <fullName evidence="2">DNA-(apurinic or apyrimidinic site) lyase MutM</fullName>
        <shortName evidence="2">AP lyase MutM</shortName>
        <ecNumber evidence="2">4.2.99.18</ecNumber>
    </alternativeName>
</protein>
<proteinExistence type="inferred from homology"/>
<organism>
    <name type="scientific">Exiguobacterium sp. (strain ATCC BAA-1283 / AT1b)</name>
    <dbReference type="NCBI Taxonomy" id="360911"/>
    <lineage>
        <taxon>Bacteria</taxon>
        <taxon>Bacillati</taxon>
        <taxon>Bacillota</taxon>
        <taxon>Bacilli</taxon>
        <taxon>Bacillales</taxon>
        <taxon>Bacillales Family XII. Incertae Sedis</taxon>
        <taxon>Exiguobacterium</taxon>
    </lineage>
</organism>
<evidence type="ECO:0000250" key="1"/>
<evidence type="ECO:0000255" key="2">
    <source>
        <dbReference type="HAMAP-Rule" id="MF_00103"/>
    </source>
</evidence>
<accession>C4L470</accession>
<sequence>MPELPEVETVCRRLRPAVSGKTIQSVDVLDPKIIRGLDPEEWVHHLIGETITDVERRGKFILFKLTNGYLVSHLRMEGKFFPYETATEPVKHTHVVITFTDQSTLHYNDVRKFGTMELRTNETIHTTPPLSLLAYEPFDERVTTEALHRRLERMKTRAIKTALLDQSIFVGLGNIYVDETLFRAGVHPTRPAASLSREEVDRVRTEAVAVLNEAIERGGSTIRSYADPDGATGTFQERLYVYGQTGEPCRRCGHEIEKMKLGGRGTHYCPHCQQR</sequence>
<keyword id="KW-0227">DNA damage</keyword>
<keyword id="KW-0234">DNA repair</keyword>
<keyword id="KW-0238">DNA-binding</keyword>
<keyword id="KW-0326">Glycosidase</keyword>
<keyword id="KW-0378">Hydrolase</keyword>
<keyword id="KW-0456">Lyase</keyword>
<keyword id="KW-0479">Metal-binding</keyword>
<keyword id="KW-0511">Multifunctional enzyme</keyword>
<keyword id="KW-0862">Zinc</keyword>
<keyword id="KW-0863">Zinc-finger</keyword>